<evidence type="ECO:0000255" key="1">
    <source>
        <dbReference type="HAMAP-Rule" id="MF_00014"/>
    </source>
</evidence>
<dbReference type="EMBL" id="AM902716">
    <property type="protein sequence ID" value="CAP42345.1"/>
    <property type="molecule type" value="Genomic_DNA"/>
</dbReference>
<dbReference type="SMR" id="A9IK36"/>
<dbReference type="STRING" id="94624.Bpet2005"/>
<dbReference type="KEGG" id="bpt:Bpet2005"/>
<dbReference type="eggNOG" id="COG0806">
    <property type="taxonomic scope" value="Bacteria"/>
</dbReference>
<dbReference type="Proteomes" id="UP000001225">
    <property type="component" value="Chromosome"/>
</dbReference>
<dbReference type="GO" id="GO:0005737">
    <property type="term" value="C:cytoplasm"/>
    <property type="evidence" value="ECO:0007669"/>
    <property type="project" value="UniProtKB-SubCell"/>
</dbReference>
<dbReference type="GO" id="GO:0005840">
    <property type="term" value="C:ribosome"/>
    <property type="evidence" value="ECO:0007669"/>
    <property type="project" value="InterPro"/>
</dbReference>
<dbReference type="GO" id="GO:0043022">
    <property type="term" value="F:ribosome binding"/>
    <property type="evidence" value="ECO:0007669"/>
    <property type="project" value="InterPro"/>
</dbReference>
<dbReference type="GO" id="GO:0042274">
    <property type="term" value="P:ribosomal small subunit biogenesis"/>
    <property type="evidence" value="ECO:0007669"/>
    <property type="project" value="UniProtKB-UniRule"/>
</dbReference>
<dbReference type="GO" id="GO:0006364">
    <property type="term" value="P:rRNA processing"/>
    <property type="evidence" value="ECO:0007669"/>
    <property type="project" value="UniProtKB-UniRule"/>
</dbReference>
<dbReference type="Gene3D" id="2.30.30.240">
    <property type="entry name" value="PRC-barrel domain"/>
    <property type="match status" value="1"/>
</dbReference>
<dbReference type="Gene3D" id="2.40.30.60">
    <property type="entry name" value="RimM"/>
    <property type="match status" value="1"/>
</dbReference>
<dbReference type="HAMAP" id="MF_00014">
    <property type="entry name" value="Ribosome_mat_RimM"/>
    <property type="match status" value="1"/>
</dbReference>
<dbReference type="InterPro" id="IPR011033">
    <property type="entry name" value="PRC_barrel-like_sf"/>
</dbReference>
<dbReference type="InterPro" id="IPR056792">
    <property type="entry name" value="PRC_RimM"/>
</dbReference>
<dbReference type="InterPro" id="IPR011961">
    <property type="entry name" value="RimM"/>
</dbReference>
<dbReference type="InterPro" id="IPR002676">
    <property type="entry name" value="RimM_N"/>
</dbReference>
<dbReference type="InterPro" id="IPR036976">
    <property type="entry name" value="RimM_N_sf"/>
</dbReference>
<dbReference type="InterPro" id="IPR009000">
    <property type="entry name" value="Transl_B-barrel_sf"/>
</dbReference>
<dbReference type="NCBIfam" id="TIGR02273">
    <property type="entry name" value="16S_RimM"/>
    <property type="match status" value="1"/>
</dbReference>
<dbReference type="PANTHER" id="PTHR33692">
    <property type="entry name" value="RIBOSOME MATURATION FACTOR RIMM"/>
    <property type="match status" value="1"/>
</dbReference>
<dbReference type="PANTHER" id="PTHR33692:SF1">
    <property type="entry name" value="RIBOSOME MATURATION FACTOR RIMM"/>
    <property type="match status" value="1"/>
</dbReference>
<dbReference type="Pfam" id="PF24986">
    <property type="entry name" value="PRC_RimM"/>
    <property type="match status" value="1"/>
</dbReference>
<dbReference type="Pfam" id="PF01782">
    <property type="entry name" value="RimM"/>
    <property type="match status" value="1"/>
</dbReference>
<dbReference type="SUPFAM" id="SSF50346">
    <property type="entry name" value="PRC-barrel domain"/>
    <property type="match status" value="1"/>
</dbReference>
<dbReference type="SUPFAM" id="SSF50447">
    <property type="entry name" value="Translation proteins"/>
    <property type="match status" value="1"/>
</dbReference>
<feature type="chain" id="PRO_0000351725" description="Ribosome maturation factor RimM">
    <location>
        <begin position="1"/>
        <end position="206"/>
    </location>
</feature>
<feature type="domain" description="PRC barrel" evidence="1">
    <location>
        <begin position="113"/>
        <end position="206"/>
    </location>
</feature>
<name>RIMM_BORPD</name>
<organism>
    <name type="scientific">Bordetella petrii (strain ATCC BAA-461 / DSM 12804 / CCUG 43448)</name>
    <dbReference type="NCBI Taxonomy" id="340100"/>
    <lineage>
        <taxon>Bacteria</taxon>
        <taxon>Pseudomonadati</taxon>
        <taxon>Pseudomonadota</taxon>
        <taxon>Betaproteobacteria</taxon>
        <taxon>Burkholderiales</taxon>
        <taxon>Alcaligenaceae</taxon>
        <taxon>Bordetella</taxon>
    </lineage>
</organism>
<keyword id="KW-0143">Chaperone</keyword>
<keyword id="KW-0963">Cytoplasm</keyword>
<keyword id="KW-0690">Ribosome biogenesis</keyword>
<keyword id="KW-0698">rRNA processing</keyword>
<comment type="function">
    <text evidence="1">An accessory protein needed during the final step in the assembly of 30S ribosomal subunit, possibly for assembly of the head region. Essential for efficient processing of 16S rRNA. May be needed both before and after RbfA during the maturation of 16S rRNA. It has affinity for free ribosomal 30S subunits but not for 70S ribosomes.</text>
</comment>
<comment type="subunit">
    <text evidence="1">Binds ribosomal protein uS19.</text>
</comment>
<comment type="subcellular location">
    <subcellularLocation>
        <location evidence="1">Cytoplasm</location>
    </subcellularLocation>
</comment>
<comment type="domain">
    <text evidence="1">The PRC barrel domain binds ribosomal protein uS19.</text>
</comment>
<comment type="similarity">
    <text evidence="1">Belongs to the RimM family.</text>
</comment>
<reference key="1">
    <citation type="journal article" date="2008" name="BMC Genomics">
        <title>The missing link: Bordetella petrii is endowed with both the metabolic versatility of environmental bacteria and virulence traits of pathogenic Bordetellae.</title>
        <authorList>
            <person name="Gross R."/>
            <person name="Guzman C.A."/>
            <person name="Sebaihia M."/>
            <person name="Martin dos Santos V.A.P."/>
            <person name="Pieper D.H."/>
            <person name="Koebnik R."/>
            <person name="Lechner M."/>
            <person name="Bartels D."/>
            <person name="Buhrmester J."/>
            <person name="Choudhuri J.V."/>
            <person name="Ebensen T."/>
            <person name="Gaigalat L."/>
            <person name="Herrmann S."/>
            <person name="Khachane A.N."/>
            <person name="Larisch C."/>
            <person name="Link S."/>
            <person name="Linke B."/>
            <person name="Meyer F."/>
            <person name="Mormann S."/>
            <person name="Nakunst D."/>
            <person name="Rueckert C."/>
            <person name="Schneiker-Bekel S."/>
            <person name="Schulze K."/>
            <person name="Voerholter F.-J."/>
            <person name="Yevsa T."/>
            <person name="Engle J.T."/>
            <person name="Goldman W.E."/>
            <person name="Puehler A."/>
            <person name="Goebel U.B."/>
            <person name="Goesmann A."/>
            <person name="Bloecker H."/>
            <person name="Kaiser O."/>
            <person name="Martinez-Arias R."/>
        </authorList>
    </citation>
    <scope>NUCLEOTIDE SEQUENCE [LARGE SCALE GENOMIC DNA]</scope>
    <source>
        <strain>ATCC BAA-461 / DSM 12804 / CCUG 43448</strain>
    </source>
</reference>
<accession>A9IK36</accession>
<protein>
    <recommendedName>
        <fullName evidence="1">Ribosome maturation factor RimM</fullName>
    </recommendedName>
</protein>
<proteinExistence type="inferred from homology"/>
<gene>
    <name evidence="1" type="primary">rimM</name>
    <name type="ordered locus">Bpet2005</name>
</gene>
<sequence>MPDAAHAAVPGDLVELGRINGAYGVKGWVKVQPHSAQADVLRKASSWWLTRLVPEKARGVVASAPQEYKVVQARPQGASVVAQLAGITDRDQAEALRGLAVQVSRSQFPAAADDEYYWVDLIGCAFYTNAEGEPARVGVVEEVFDNGAHAILRVVLQRAPAPGGEPEPRRDAKGRPLEMLVPFVGAHILAVDLSARRIDSNWPTEL</sequence>